<organism>
    <name type="scientific">Solanum lycopersicum</name>
    <name type="common">Tomato</name>
    <name type="synonym">Lycopersicon esculentum</name>
    <dbReference type="NCBI Taxonomy" id="4081"/>
    <lineage>
        <taxon>Eukaryota</taxon>
        <taxon>Viridiplantae</taxon>
        <taxon>Streptophyta</taxon>
        <taxon>Embryophyta</taxon>
        <taxon>Tracheophyta</taxon>
        <taxon>Spermatophyta</taxon>
        <taxon>Magnoliopsida</taxon>
        <taxon>eudicotyledons</taxon>
        <taxon>Gunneridae</taxon>
        <taxon>Pentapetalae</taxon>
        <taxon>asterids</taxon>
        <taxon>lamiids</taxon>
        <taxon>Solanales</taxon>
        <taxon>Solanaceae</taxon>
        <taxon>Solanoideae</taxon>
        <taxon>Solaneae</taxon>
        <taxon>Solanum</taxon>
        <taxon>Solanum subgen. Lycopersicon</taxon>
    </lineage>
</organism>
<evidence type="ECO:0000255" key="1">
    <source>
        <dbReference type="HAMAP-Rule" id="MF_01358"/>
    </source>
</evidence>
<keyword id="KW-0150">Chloroplast</keyword>
<keyword id="KW-0472">Membrane</keyword>
<keyword id="KW-0520">NAD</keyword>
<keyword id="KW-0521">NADP</keyword>
<keyword id="KW-0934">Plastid</keyword>
<keyword id="KW-0618">Plastoquinone</keyword>
<keyword id="KW-0874">Quinone</keyword>
<keyword id="KW-1185">Reference proteome</keyword>
<keyword id="KW-0793">Thylakoid</keyword>
<keyword id="KW-1278">Translocase</keyword>
<keyword id="KW-0813">Transport</keyword>
<sequence>MTAPTTRKDLMIVNMGPQHPSMHGVLRLIVTLDGEDVVDCEPILGYLHRGMEKIAENRTIIQYLPYVTRWDYLATMFTEAITINGPEQLGNIQVPKRASYIRVIMLELSRIASHLLWLGPFMADIGAQTPFFYIFRERELIYDLFEAATGMRMMHNYFRIGGVAADLPYGWIDKCLDFCDYFLTGVAEYQKLITRNPIFLERVEGVGIIGRDEALNWGLSGPMLRASGIEWDLRKVDHYESYDEFDWQVQWQREGDSLARYLVRIGEMTESIKIIQQALEGIPGGPYENLEMRRFDRLKDPEWNDFEYRFISKKPSPTFELSKQELYVRVEAPKGELGIFLIGDQSVFPWRWKIRPPGFINLQILPQLVKRMKLADIMTILGSIDIIMGEVDR</sequence>
<protein>
    <recommendedName>
        <fullName evidence="1">NAD(P)H-quinone oxidoreductase subunit H, chloroplastic</fullName>
        <ecNumber evidence="1">7.1.1.-</ecNumber>
    </recommendedName>
    <alternativeName>
        <fullName>NAD(P)H dehydrogenase subunit H</fullName>
    </alternativeName>
    <alternativeName>
        <fullName evidence="1">NADH-plastoquinone oxidoreductase 49 kDa subunit</fullName>
    </alternativeName>
    <alternativeName>
        <fullName evidence="1">NADH-plastoquinone oxidoreductase subunit H</fullName>
    </alternativeName>
</protein>
<accession>Q2MI44</accession>
<proteinExistence type="inferred from homology"/>
<comment type="function">
    <text evidence="1">NDH shuttles electrons from NAD(P)H:plastoquinone, via FMN and iron-sulfur (Fe-S) centers, to quinones in the photosynthetic chain and possibly in a chloroplast respiratory chain. The immediate electron acceptor for the enzyme in this species is believed to be plastoquinone. Couples the redox reaction to proton translocation, and thus conserves the redox energy in a proton gradient.</text>
</comment>
<comment type="catalytic activity">
    <reaction evidence="1">
        <text>a plastoquinone + NADH + (n+1) H(+)(in) = a plastoquinol + NAD(+) + n H(+)(out)</text>
        <dbReference type="Rhea" id="RHEA:42608"/>
        <dbReference type="Rhea" id="RHEA-COMP:9561"/>
        <dbReference type="Rhea" id="RHEA-COMP:9562"/>
        <dbReference type="ChEBI" id="CHEBI:15378"/>
        <dbReference type="ChEBI" id="CHEBI:17757"/>
        <dbReference type="ChEBI" id="CHEBI:57540"/>
        <dbReference type="ChEBI" id="CHEBI:57945"/>
        <dbReference type="ChEBI" id="CHEBI:62192"/>
    </reaction>
</comment>
<comment type="catalytic activity">
    <reaction evidence="1">
        <text>a plastoquinone + NADPH + (n+1) H(+)(in) = a plastoquinol + NADP(+) + n H(+)(out)</text>
        <dbReference type="Rhea" id="RHEA:42612"/>
        <dbReference type="Rhea" id="RHEA-COMP:9561"/>
        <dbReference type="Rhea" id="RHEA-COMP:9562"/>
        <dbReference type="ChEBI" id="CHEBI:15378"/>
        <dbReference type="ChEBI" id="CHEBI:17757"/>
        <dbReference type="ChEBI" id="CHEBI:57783"/>
        <dbReference type="ChEBI" id="CHEBI:58349"/>
        <dbReference type="ChEBI" id="CHEBI:62192"/>
    </reaction>
</comment>
<comment type="subunit">
    <text evidence="1">NDH is composed of at least 16 different subunits, 5 of which are encoded in the nucleus.</text>
</comment>
<comment type="subcellular location">
    <subcellularLocation>
        <location evidence="1">Plastid</location>
        <location evidence="1">Chloroplast thylakoid membrane</location>
        <topology evidence="1">Peripheral membrane protein</topology>
        <orientation evidence="1">Stromal side</orientation>
    </subcellularLocation>
</comment>
<comment type="similarity">
    <text evidence="1">Belongs to the complex I 49 kDa subunit family.</text>
</comment>
<name>NDHH_SOLLC</name>
<gene>
    <name evidence="1" type="primary">ndhH</name>
</gene>
<reference key="1">
    <citation type="journal article" date="2006" name="Theor. Appl. Genet.">
        <title>Complete chloroplast genome sequences of Solanum bulbocastanum, Solanum lycopersicum and comparative analyses with other Solanaceae genomes.</title>
        <authorList>
            <person name="Daniell H."/>
            <person name="Lee S.-B."/>
            <person name="Grevich J."/>
            <person name="Saski C."/>
            <person name="Quesada-Vargas T."/>
            <person name="Guda C."/>
            <person name="Tomkins J."/>
            <person name="Jansen R.K."/>
        </authorList>
    </citation>
    <scope>NUCLEOTIDE SEQUENCE [LARGE SCALE GENOMIC DNA]</scope>
    <source>
        <strain>cv. LA3023</strain>
    </source>
</reference>
<reference key="2">
    <citation type="journal article" date="2006" name="J. Mol. Evol.">
        <title>Sequence of the tomato chloroplast DNA and evolutionary comparison of solanaceous plastid genomes.</title>
        <authorList>
            <person name="Kahlau S."/>
            <person name="Aspinall S."/>
            <person name="Gray J.C."/>
            <person name="Bock R."/>
        </authorList>
    </citation>
    <scope>NUCLEOTIDE SEQUENCE [LARGE SCALE GENOMIC DNA]</scope>
    <source>
        <strain>cv. IPA-6</strain>
    </source>
</reference>
<geneLocation type="chloroplast"/>
<dbReference type="EC" id="7.1.1.-" evidence="1"/>
<dbReference type="EMBL" id="DQ347959">
    <property type="protein sequence ID" value="ABC56357.1"/>
    <property type="molecule type" value="Genomic_DNA"/>
</dbReference>
<dbReference type="EMBL" id="AM087200">
    <property type="protein sequence ID" value="CAJ32451.1"/>
    <property type="molecule type" value="Genomic_DNA"/>
</dbReference>
<dbReference type="RefSeq" id="AP_004985.1">
    <property type="nucleotide sequence ID" value="AC_000188.1"/>
</dbReference>
<dbReference type="RefSeq" id="YP_008563145.1">
    <property type="nucleotide sequence ID" value="NC_007898.3"/>
</dbReference>
<dbReference type="SMR" id="Q2MI44"/>
<dbReference type="FunCoup" id="Q2MI44">
    <property type="interactions" value="12"/>
</dbReference>
<dbReference type="STRING" id="4081.Q2MI44"/>
<dbReference type="PaxDb" id="4081-Solyc01g011410.1.1"/>
<dbReference type="GeneID" id="3950453"/>
<dbReference type="KEGG" id="sly:3950453"/>
<dbReference type="eggNOG" id="KOG2870">
    <property type="taxonomic scope" value="Eukaryota"/>
</dbReference>
<dbReference type="InParanoid" id="Q2MI44"/>
<dbReference type="OrthoDB" id="1244686at2759"/>
<dbReference type="Proteomes" id="UP000004994">
    <property type="component" value="Chloroplast"/>
</dbReference>
<dbReference type="ExpressionAtlas" id="Q2MI44">
    <property type="expression patterns" value="baseline"/>
</dbReference>
<dbReference type="GO" id="GO:0009535">
    <property type="term" value="C:chloroplast thylakoid membrane"/>
    <property type="evidence" value="ECO:0007669"/>
    <property type="project" value="UniProtKB-SubCell"/>
</dbReference>
<dbReference type="GO" id="GO:0051287">
    <property type="term" value="F:NAD binding"/>
    <property type="evidence" value="ECO:0007669"/>
    <property type="project" value="InterPro"/>
</dbReference>
<dbReference type="GO" id="GO:0016655">
    <property type="term" value="F:oxidoreductase activity, acting on NAD(P)H, quinone or similar compound as acceptor"/>
    <property type="evidence" value="ECO:0007669"/>
    <property type="project" value="UniProtKB-UniRule"/>
</dbReference>
<dbReference type="GO" id="GO:0048038">
    <property type="term" value="F:quinone binding"/>
    <property type="evidence" value="ECO:0007669"/>
    <property type="project" value="UniProtKB-KW"/>
</dbReference>
<dbReference type="GO" id="GO:0019684">
    <property type="term" value="P:photosynthesis, light reaction"/>
    <property type="evidence" value="ECO:0007669"/>
    <property type="project" value="UniProtKB-UniRule"/>
</dbReference>
<dbReference type="FunFam" id="1.10.645.10:FF:000003">
    <property type="entry name" value="NAD(P)H-quinone oxidoreductase subunit H, chloroplastic"/>
    <property type="match status" value="1"/>
</dbReference>
<dbReference type="Gene3D" id="1.10.645.10">
    <property type="entry name" value="Cytochrome-c3 Hydrogenase, chain B"/>
    <property type="match status" value="1"/>
</dbReference>
<dbReference type="HAMAP" id="MF_01358">
    <property type="entry name" value="NDH1_NuoD"/>
    <property type="match status" value="1"/>
</dbReference>
<dbReference type="InterPro" id="IPR001135">
    <property type="entry name" value="NADH_Q_OxRdtase_suD"/>
</dbReference>
<dbReference type="InterPro" id="IPR014029">
    <property type="entry name" value="NADH_UbQ_OxRdtase_49kDa_CS"/>
</dbReference>
<dbReference type="InterPro" id="IPR022885">
    <property type="entry name" value="NDH1_su_D/H"/>
</dbReference>
<dbReference type="InterPro" id="IPR029014">
    <property type="entry name" value="NiFe-Hase_large"/>
</dbReference>
<dbReference type="NCBIfam" id="NF004739">
    <property type="entry name" value="PRK06075.1"/>
    <property type="match status" value="1"/>
</dbReference>
<dbReference type="NCBIfam" id="NF005649">
    <property type="entry name" value="PRK07415.1"/>
    <property type="match status" value="1"/>
</dbReference>
<dbReference type="PANTHER" id="PTHR11993:SF10">
    <property type="entry name" value="NADH DEHYDROGENASE [UBIQUINONE] IRON-SULFUR PROTEIN 2, MITOCHONDRIAL"/>
    <property type="match status" value="1"/>
</dbReference>
<dbReference type="PANTHER" id="PTHR11993">
    <property type="entry name" value="NADH-UBIQUINONE OXIDOREDUCTASE 49 KDA SUBUNIT"/>
    <property type="match status" value="1"/>
</dbReference>
<dbReference type="Pfam" id="PF00346">
    <property type="entry name" value="Complex1_49kDa"/>
    <property type="match status" value="1"/>
</dbReference>
<dbReference type="SUPFAM" id="SSF56762">
    <property type="entry name" value="HydB/Nqo4-like"/>
    <property type="match status" value="1"/>
</dbReference>
<dbReference type="PROSITE" id="PS00535">
    <property type="entry name" value="COMPLEX1_49K"/>
    <property type="match status" value="1"/>
</dbReference>
<feature type="chain" id="PRO_0000277416" description="NAD(P)H-quinone oxidoreductase subunit H, chloroplastic">
    <location>
        <begin position="1"/>
        <end position="393"/>
    </location>
</feature>